<gene>
    <name evidence="1" type="primary">rplB</name>
    <name type="ordered locus">Sbal223_4053</name>
</gene>
<feature type="chain" id="PRO_1000165767" description="Large ribosomal subunit protein uL2">
    <location>
        <begin position="1"/>
        <end position="274"/>
    </location>
</feature>
<feature type="region of interest" description="Disordered" evidence="2">
    <location>
        <begin position="223"/>
        <end position="274"/>
    </location>
</feature>
<comment type="function">
    <text evidence="1">One of the primary rRNA binding proteins. Required for association of the 30S and 50S subunits to form the 70S ribosome, for tRNA binding and peptide bond formation. It has been suggested to have peptidyltransferase activity; this is somewhat controversial. Makes several contacts with the 16S rRNA in the 70S ribosome.</text>
</comment>
<comment type="subunit">
    <text evidence="1">Part of the 50S ribosomal subunit. Forms a bridge to the 30S subunit in the 70S ribosome.</text>
</comment>
<comment type="similarity">
    <text evidence="1">Belongs to the universal ribosomal protein uL2 family.</text>
</comment>
<reference key="1">
    <citation type="submission" date="2008-12" db="EMBL/GenBank/DDBJ databases">
        <title>Complete sequence of chromosome of Shewanella baltica OS223.</title>
        <authorList>
            <consortium name="US DOE Joint Genome Institute"/>
            <person name="Lucas S."/>
            <person name="Copeland A."/>
            <person name="Lapidus A."/>
            <person name="Glavina del Rio T."/>
            <person name="Dalin E."/>
            <person name="Tice H."/>
            <person name="Bruce D."/>
            <person name="Goodwin L."/>
            <person name="Pitluck S."/>
            <person name="Chertkov O."/>
            <person name="Meincke L."/>
            <person name="Brettin T."/>
            <person name="Detter J.C."/>
            <person name="Han C."/>
            <person name="Kuske C.R."/>
            <person name="Larimer F."/>
            <person name="Land M."/>
            <person name="Hauser L."/>
            <person name="Kyrpides N."/>
            <person name="Ovchinnikova G."/>
            <person name="Brettar I."/>
            <person name="Rodrigues J."/>
            <person name="Konstantinidis K."/>
            <person name="Tiedje J."/>
        </authorList>
    </citation>
    <scope>NUCLEOTIDE SEQUENCE [LARGE SCALE GENOMIC DNA]</scope>
    <source>
        <strain>OS223</strain>
    </source>
</reference>
<sequence>MAVIKCKPTSPGRRHVVKVVNTDLHKGKPFAGLLAKKSKSGGRNNTGRITVRHVGGGHKQHYRLIDFKRDKDGIPAKIERLEYDPNRTANIALVLYADGERRYILAAKGMQAGDKIQSGVAAEIKTGNAMPLRNIPVGSVVHAVEMKPGKGAQIARSAGAYVQVVARDGAYATLRLRSGEMRKVPVDCRATFGEVGNAEHMLRQLGKAGAKRWRGIRPTVRGVAMNPVDHPHGGGEGRTSGGRHPVTPWGVPTKGYKTRSNKRTDKYIVRRRNK</sequence>
<protein>
    <recommendedName>
        <fullName evidence="1">Large ribosomal subunit protein uL2</fullName>
    </recommendedName>
    <alternativeName>
        <fullName evidence="3">50S ribosomal protein L2</fullName>
    </alternativeName>
</protein>
<keyword id="KW-0687">Ribonucleoprotein</keyword>
<keyword id="KW-0689">Ribosomal protein</keyword>
<keyword id="KW-0694">RNA-binding</keyword>
<keyword id="KW-0699">rRNA-binding</keyword>
<name>RL2_SHEB2</name>
<proteinExistence type="inferred from homology"/>
<accession>B8EBK2</accession>
<organism>
    <name type="scientific">Shewanella baltica (strain OS223)</name>
    <dbReference type="NCBI Taxonomy" id="407976"/>
    <lineage>
        <taxon>Bacteria</taxon>
        <taxon>Pseudomonadati</taxon>
        <taxon>Pseudomonadota</taxon>
        <taxon>Gammaproteobacteria</taxon>
        <taxon>Alteromonadales</taxon>
        <taxon>Shewanellaceae</taxon>
        <taxon>Shewanella</taxon>
    </lineage>
</organism>
<dbReference type="EMBL" id="CP001252">
    <property type="protein sequence ID" value="ACK48526.1"/>
    <property type="molecule type" value="Genomic_DNA"/>
</dbReference>
<dbReference type="RefSeq" id="WP_006083597.1">
    <property type="nucleotide sequence ID" value="NC_011663.1"/>
</dbReference>
<dbReference type="SMR" id="B8EBK2"/>
<dbReference type="GeneID" id="11770562"/>
<dbReference type="KEGG" id="sbp:Sbal223_4053"/>
<dbReference type="HOGENOM" id="CLU_036235_2_1_6"/>
<dbReference type="Proteomes" id="UP000002507">
    <property type="component" value="Chromosome"/>
</dbReference>
<dbReference type="GO" id="GO:0015934">
    <property type="term" value="C:large ribosomal subunit"/>
    <property type="evidence" value="ECO:0007669"/>
    <property type="project" value="InterPro"/>
</dbReference>
<dbReference type="GO" id="GO:0019843">
    <property type="term" value="F:rRNA binding"/>
    <property type="evidence" value="ECO:0007669"/>
    <property type="project" value="UniProtKB-UniRule"/>
</dbReference>
<dbReference type="GO" id="GO:0003735">
    <property type="term" value="F:structural constituent of ribosome"/>
    <property type="evidence" value="ECO:0007669"/>
    <property type="project" value="InterPro"/>
</dbReference>
<dbReference type="GO" id="GO:0016740">
    <property type="term" value="F:transferase activity"/>
    <property type="evidence" value="ECO:0007669"/>
    <property type="project" value="InterPro"/>
</dbReference>
<dbReference type="GO" id="GO:0002181">
    <property type="term" value="P:cytoplasmic translation"/>
    <property type="evidence" value="ECO:0007669"/>
    <property type="project" value="TreeGrafter"/>
</dbReference>
<dbReference type="FunFam" id="2.30.30.30:FF:000001">
    <property type="entry name" value="50S ribosomal protein L2"/>
    <property type="match status" value="1"/>
</dbReference>
<dbReference type="FunFam" id="2.40.50.140:FF:000003">
    <property type="entry name" value="50S ribosomal protein L2"/>
    <property type="match status" value="1"/>
</dbReference>
<dbReference type="FunFam" id="4.10.950.10:FF:000001">
    <property type="entry name" value="50S ribosomal protein L2"/>
    <property type="match status" value="1"/>
</dbReference>
<dbReference type="Gene3D" id="2.30.30.30">
    <property type="match status" value="1"/>
</dbReference>
<dbReference type="Gene3D" id="2.40.50.140">
    <property type="entry name" value="Nucleic acid-binding proteins"/>
    <property type="match status" value="1"/>
</dbReference>
<dbReference type="Gene3D" id="4.10.950.10">
    <property type="entry name" value="Ribosomal protein L2, domain 3"/>
    <property type="match status" value="1"/>
</dbReference>
<dbReference type="HAMAP" id="MF_01320_B">
    <property type="entry name" value="Ribosomal_uL2_B"/>
    <property type="match status" value="1"/>
</dbReference>
<dbReference type="InterPro" id="IPR012340">
    <property type="entry name" value="NA-bd_OB-fold"/>
</dbReference>
<dbReference type="InterPro" id="IPR014722">
    <property type="entry name" value="Rib_uL2_dom2"/>
</dbReference>
<dbReference type="InterPro" id="IPR002171">
    <property type="entry name" value="Ribosomal_uL2"/>
</dbReference>
<dbReference type="InterPro" id="IPR005880">
    <property type="entry name" value="Ribosomal_uL2_bac/org-type"/>
</dbReference>
<dbReference type="InterPro" id="IPR022669">
    <property type="entry name" value="Ribosomal_uL2_C"/>
</dbReference>
<dbReference type="InterPro" id="IPR022671">
    <property type="entry name" value="Ribosomal_uL2_CS"/>
</dbReference>
<dbReference type="InterPro" id="IPR014726">
    <property type="entry name" value="Ribosomal_uL2_dom3"/>
</dbReference>
<dbReference type="InterPro" id="IPR022666">
    <property type="entry name" value="Ribosomal_uL2_RNA-bd_dom"/>
</dbReference>
<dbReference type="InterPro" id="IPR008991">
    <property type="entry name" value="Translation_prot_SH3-like_sf"/>
</dbReference>
<dbReference type="NCBIfam" id="TIGR01171">
    <property type="entry name" value="rplB_bact"/>
    <property type="match status" value="1"/>
</dbReference>
<dbReference type="PANTHER" id="PTHR13691:SF5">
    <property type="entry name" value="LARGE RIBOSOMAL SUBUNIT PROTEIN UL2M"/>
    <property type="match status" value="1"/>
</dbReference>
<dbReference type="PANTHER" id="PTHR13691">
    <property type="entry name" value="RIBOSOMAL PROTEIN L2"/>
    <property type="match status" value="1"/>
</dbReference>
<dbReference type="Pfam" id="PF00181">
    <property type="entry name" value="Ribosomal_L2"/>
    <property type="match status" value="1"/>
</dbReference>
<dbReference type="Pfam" id="PF03947">
    <property type="entry name" value="Ribosomal_L2_C"/>
    <property type="match status" value="1"/>
</dbReference>
<dbReference type="PIRSF" id="PIRSF002158">
    <property type="entry name" value="Ribosomal_L2"/>
    <property type="match status" value="1"/>
</dbReference>
<dbReference type="SMART" id="SM01383">
    <property type="entry name" value="Ribosomal_L2"/>
    <property type="match status" value="1"/>
</dbReference>
<dbReference type="SMART" id="SM01382">
    <property type="entry name" value="Ribosomal_L2_C"/>
    <property type="match status" value="1"/>
</dbReference>
<dbReference type="SUPFAM" id="SSF50249">
    <property type="entry name" value="Nucleic acid-binding proteins"/>
    <property type="match status" value="1"/>
</dbReference>
<dbReference type="SUPFAM" id="SSF50104">
    <property type="entry name" value="Translation proteins SH3-like domain"/>
    <property type="match status" value="1"/>
</dbReference>
<dbReference type="PROSITE" id="PS00467">
    <property type="entry name" value="RIBOSOMAL_L2"/>
    <property type="match status" value="1"/>
</dbReference>
<evidence type="ECO:0000255" key="1">
    <source>
        <dbReference type="HAMAP-Rule" id="MF_01320"/>
    </source>
</evidence>
<evidence type="ECO:0000256" key="2">
    <source>
        <dbReference type="SAM" id="MobiDB-lite"/>
    </source>
</evidence>
<evidence type="ECO:0000305" key="3"/>